<accession>A3CL27</accession>
<comment type="catalytic activity">
    <reaction evidence="1">
        <text>(6S)-5,6,7,8-tetrahydrofolate + formate + ATP = (6R)-10-formyltetrahydrofolate + ADP + phosphate</text>
        <dbReference type="Rhea" id="RHEA:20221"/>
        <dbReference type="ChEBI" id="CHEBI:15740"/>
        <dbReference type="ChEBI" id="CHEBI:30616"/>
        <dbReference type="ChEBI" id="CHEBI:43474"/>
        <dbReference type="ChEBI" id="CHEBI:57453"/>
        <dbReference type="ChEBI" id="CHEBI:195366"/>
        <dbReference type="ChEBI" id="CHEBI:456216"/>
        <dbReference type="EC" id="6.3.4.3"/>
    </reaction>
</comment>
<comment type="pathway">
    <text evidence="1">One-carbon metabolism; tetrahydrofolate interconversion.</text>
</comment>
<comment type="similarity">
    <text evidence="1">Belongs to the formate--tetrahydrofolate ligase family.</text>
</comment>
<comment type="sequence caution" evidence="2">
    <conflict type="erroneous initiation">
        <sequence resource="EMBL-CDS" id="ABN43882"/>
    </conflict>
</comment>
<reference key="1">
    <citation type="journal article" date="2007" name="J. Bacteriol.">
        <title>Genome of the opportunistic pathogen Streptococcus sanguinis.</title>
        <authorList>
            <person name="Xu P."/>
            <person name="Alves J.M."/>
            <person name="Kitten T."/>
            <person name="Brown A."/>
            <person name="Chen Z."/>
            <person name="Ozaki L.S."/>
            <person name="Manque P."/>
            <person name="Ge X."/>
            <person name="Serrano M.G."/>
            <person name="Puiu D."/>
            <person name="Hendricks S."/>
            <person name="Wang Y."/>
            <person name="Chaplin M.D."/>
            <person name="Akan D."/>
            <person name="Paik S."/>
            <person name="Peterson D.L."/>
            <person name="Macrina F.L."/>
            <person name="Buck G.A."/>
        </authorList>
    </citation>
    <scope>NUCLEOTIDE SEQUENCE [LARGE SCALE GENOMIC DNA]</scope>
    <source>
        <strain>SK36</strain>
    </source>
</reference>
<protein>
    <recommendedName>
        <fullName evidence="1">Formate--tetrahydrofolate ligase 1</fullName>
        <ecNumber evidence="1">6.3.4.3</ecNumber>
    </recommendedName>
    <alternativeName>
        <fullName evidence="1">Formyltetrahydrofolate synthetase 1</fullName>
        <shortName evidence="1">FHS 1</shortName>
        <shortName evidence="1">FTHFS 1</shortName>
    </alternativeName>
</protein>
<gene>
    <name evidence="1" type="primary">fhs1</name>
    <name type="ordered locus">SSA_0432</name>
</gene>
<name>FTHS1_STRSV</name>
<organism>
    <name type="scientific">Streptococcus sanguinis (strain SK36)</name>
    <dbReference type="NCBI Taxonomy" id="388919"/>
    <lineage>
        <taxon>Bacteria</taxon>
        <taxon>Bacillati</taxon>
        <taxon>Bacillota</taxon>
        <taxon>Bacilli</taxon>
        <taxon>Lactobacillales</taxon>
        <taxon>Streptococcaceae</taxon>
        <taxon>Streptococcus</taxon>
    </lineage>
</organism>
<sequence length="557" mass="59000">MVLSDIEIANSVQMKSIKEVAEKLGIAEDALSLYGNYKAKISAGQLEALKDKPDGKLILVTAISPTPAGEGKTTTSVGLVDALAAIGKKAVIALREPSLGPVFGIKGGAAGGGHAQVVPMEDINLHFTGDFHAIGVANNLLAALIDNHIHHGNALGIDSRRITWKRAVDMNDRQLRHIVDGLQGKVNGVPREDGFDITVASEVMAILCLSENITDLKNRLEKIIIGYSFEGKPVTAKDLKAGGAMAAVLKDAIHPNLVQTLEHTPALIHGGPFANIAHGCNSVLATKLALKYADYAVTEAGFGADLGAEKFIDIKCRTSGLRPAAVVLVATIRALKMHGGVAKSDLAEENVQAVVDGLPNLEKHLENIQDVYGLPAVVAINKFPLDTEAELQAVYDACQKRGVDVVISDVWANGGAGGKELAEKVVELAEGDNHFQFVYNEEDSIETKLNKIVTKVYGGKGVRLTPAAKRELKQLDELGFSNYPICMAKTQYSFSDDAKKLGAPKDFVVTISQLKVSAGAGFIVALTGAIMTMPGLPKVPASEKIDVDKDGNISGLF</sequence>
<evidence type="ECO:0000255" key="1">
    <source>
        <dbReference type="HAMAP-Rule" id="MF_01543"/>
    </source>
</evidence>
<evidence type="ECO:0000305" key="2"/>
<proteinExistence type="inferred from homology"/>
<keyword id="KW-0067">ATP-binding</keyword>
<keyword id="KW-0436">Ligase</keyword>
<keyword id="KW-0547">Nucleotide-binding</keyword>
<keyword id="KW-0554">One-carbon metabolism</keyword>
<keyword id="KW-1185">Reference proteome</keyword>
<dbReference type="EC" id="6.3.4.3" evidence="1"/>
<dbReference type="EMBL" id="CP000387">
    <property type="protein sequence ID" value="ABN43882.1"/>
    <property type="status" value="ALT_INIT"/>
    <property type="molecule type" value="Genomic_DNA"/>
</dbReference>
<dbReference type="RefSeq" id="WP_011836509.1">
    <property type="nucleotide sequence ID" value="NC_009009.1"/>
</dbReference>
<dbReference type="RefSeq" id="YP_001034432.2">
    <property type="nucleotide sequence ID" value="NC_009009.1"/>
</dbReference>
<dbReference type="SMR" id="A3CL27"/>
<dbReference type="STRING" id="388919.SSA_0432"/>
<dbReference type="KEGG" id="ssa:SSA_0432"/>
<dbReference type="PATRIC" id="fig|388919.9.peg.418"/>
<dbReference type="eggNOG" id="COG2759">
    <property type="taxonomic scope" value="Bacteria"/>
</dbReference>
<dbReference type="HOGENOM" id="CLU_003601_3_3_9"/>
<dbReference type="OrthoDB" id="9761733at2"/>
<dbReference type="UniPathway" id="UPA00193"/>
<dbReference type="Proteomes" id="UP000002148">
    <property type="component" value="Chromosome"/>
</dbReference>
<dbReference type="GO" id="GO:0005524">
    <property type="term" value="F:ATP binding"/>
    <property type="evidence" value="ECO:0007669"/>
    <property type="project" value="UniProtKB-UniRule"/>
</dbReference>
<dbReference type="GO" id="GO:0004329">
    <property type="term" value="F:formate-tetrahydrofolate ligase activity"/>
    <property type="evidence" value="ECO:0007669"/>
    <property type="project" value="UniProtKB-UniRule"/>
</dbReference>
<dbReference type="GO" id="GO:0035999">
    <property type="term" value="P:tetrahydrofolate interconversion"/>
    <property type="evidence" value="ECO:0007669"/>
    <property type="project" value="UniProtKB-UniRule"/>
</dbReference>
<dbReference type="CDD" id="cd00477">
    <property type="entry name" value="FTHFS"/>
    <property type="match status" value="1"/>
</dbReference>
<dbReference type="FunFam" id="3.30.1510.10:FF:000001">
    <property type="entry name" value="Formate--tetrahydrofolate ligase"/>
    <property type="match status" value="1"/>
</dbReference>
<dbReference type="FunFam" id="3.10.410.10:FF:000001">
    <property type="entry name" value="Putative formate--tetrahydrofolate ligase"/>
    <property type="match status" value="1"/>
</dbReference>
<dbReference type="Gene3D" id="3.30.1510.10">
    <property type="entry name" value="Domain 2, N(10)-formyltetrahydrofolate synthetase"/>
    <property type="match status" value="1"/>
</dbReference>
<dbReference type="Gene3D" id="3.10.410.10">
    <property type="entry name" value="Formyltetrahydrofolate synthetase, domain 3"/>
    <property type="match status" value="1"/>
</dbReference>
<dbReference type="Gene3D" id="3.40.50.300">
    <property type="entry name" value="P-loop containing nucleotide triphosphate hydrolases"/>
    <property type="match status" value="1"/>
</dbReference>
<dbReference type="HAMAP" id="MF_01543">
    <property type="entry name" value="FTHFS"/>
    <property type="match status" value="1"/>
</dbReference>
<dbReference type="InterPro" id="IPR000559">
    <property type="entry name" value="Formate_THF_ligase"/>
</dbReference>
<dbReference type="InterPro" id="IPR020628">
    <property type="entry name" value="Formate_THF_ligase_CS"/>
</dbReference>
<dbReference type="InterPro" id="IPR027417">
    <property type="entry name" value="P-loop_NTPase"/>
</dbReference>
<dbReference type="NCBIfam" id="NF010030">
    <property type="entry name" value="PRK13505.1"/>
    <property type="match status" value="1"/>
</dbReference>
<dbReference type="Pfam" id="PF01268">
    <property type="entry name" value="FTHFS"/>
    <property type="match status" value="1"/>
</dbReference>
<dbReference type="SUPFAM" id="SSF52540">
    <property type="entry name" value="P-loop containing nucleoside triphosphate hydrolases"/>
    <property type="match status" value="1"/>
</dbReference>
<dbReference type="PROSITE" id="PS00721">
    <property type="entry name" value="FTHFS_1"/>
    <property type="match status" value="1"/>
</dbReference>
<dbReference type="PROSITE" id="PS00722">
    <property type="entry name" value="FTHFS_2"/>
    <property type="match status" value="1"/>
</dbReference>
<feature type="chain" id="PRO_0000293069" description="Formate--tetrahydrofolate ligase 1">
    <location>
        <begin position="1"/>
        <end position="557"/>
    </location>
</feature>
<feature type="binding site" evidence="1">
    <location>
        <begin position="66"/>
        <end position="73"/>
    </location>
    <ligand>
        <name>ATP</name>
        <dbReference type="ChEBI" id="CHEBI:30616"/>
    </ligand>
</feature>